<keyword id="KW-0686">Riboflavin biosynthesis</keyword>
<keyword id="KW-0808">Transferase</keyword>
<gene>
    <name evidence="1" type="primary">ribH</name>
    <name type="ordered locus">CTN_0757</name>
</gene>
<accession>B9K7K0</accession>
<dbReference type="EC" id="2.5.1.78" evidence="1"/>
<dbReference type="EMBL" id="CP000916">
    <property type="protein sequence ID" value="ACM22933.1"/>
    <property type="molecule type" value="Genomic_DNA"/>
</dbReference>
<dbReference type="RefSeq" id="WP_015919250.1">
    <property type="nucleotide sequence ID" value="NC_011978.1"/>
</dbReference>
<dbReference type="SMR" id="B9K7K0"/>
<dbReference type="STRING" id="309803.CTN_0757"/>
<dbReference type="KEGG" id="tna:CTN_0757"/>
<dbReference type="eggNOG" id="COG0054">
    <property type="taxonomic scope" value="Bacteria"/>
</dbReference>
<dbReference type="HOGENOM" id="CLU_089358_1_1_0"/>
<dbReference type="UniPathway" id="UPA00275">
    <property type="reaction ID" value="UER00404"/>
</dbReference>
<dbReference type="Proteomes" id="UP000000445">
    <property type="component" value="Chromosome"/>
</dbReference>
<dbReference type="GO" id="GO:0005829">
    <property type="term" value="C:cytosol"/>
    <property type="evidence" value="ECO:0007669"/>
    <property type="project" value="TreeGrafter"/>
</dbReference>
<dbReference type="GO" id="GO:0009349">
    <property type="term" value="C:riboflavin synthase complex"/>
    <property type="evidence" value="ECO:0007669"/>
    <property type="project" value="InterPro"/>
</dbReference>
<dbReference type="GO" id="GO:0000906">
    <property type="term" value="F:6,7-dimethyl-8-ribityllumazine synthase activity"/>
    <property type="evidence" value="ECO:0007669"/>
    <property type="project" value="UniProtKB-UniRule"/>
</dbReference>
<dbReference type="GO" id="GO:0009231">
    <property type="term" value="P:riboflavin biosynthetic process"/>
    <property type="evidence" value="ECO:0007669"/>
    <property type="project" value="UniProtKB-UniRule"/>
</dbReference>
<dbReference type="CDD" id="cd09209">
    <property type="entry name" value="Lumazine_synthase-I"/>
    <property type="match status" value="1"/>
</dbReference>
<dbReference type="FunFam" id="3.40.50.960:FF:000001">
    <property type="entry name" value="6,7-dimethyl-8-ribityllumazine synthase"/>
    <property type="match status" value="1"/>
</dbReference>
<dbReference type="Gene3D" id="3.40.50.960">
    <property type="entry name" value="Lumazine/riboflavin synthase"/>
    <property type="match status" value="1"/>
</dbReference>
<dbReference type="HAMAP" id="MF_00178">
    <property type="entry name" value="Lumazine_synth"/>
    <property type="match status" value="1"/>
</dbReference>
<dbReference type="InterPro" id="IPR034964">
    <property type="entry name" value="LS"/>
</dbReference>
<dbReference type="InterPro" id="IPR002180">
    <property type="entry name" value="LS/RS"/>
</dbReference>
<dbReference type="InterPro" id="IPR036467">
    <property type="entry name" value="LS/RS_sf"/>
</dbReference>
<dbReference type="NCBIfam" id="TIGR00114">
    <property type="entry name" value="lumazine-synth"/>
    <property type="match status" value="1"/>
</dbReference>
<dbReference type="PANTHER" id="PTHR21058:SF0">
    <property type="entry name" value="6,7-DIMETHYL-8-RIBITYLLUMAZINE SYNTHASE"/>
    <property type="match status" value="1"/>
</dbReference>
<dbReference type="PANTHER" id="PTHR21058">
    <property type="entry name" value="6,7-DIMETHYL-8-RIBITYLLUMAZINE SYNTHASE DMRL SYNTHASE LUMAZINE SYNTHASE"/>
    <property type="match status" value="1"/>
</dbReference>
<dbReference type="Pfam" id="PF00885">
    <property type="entry name" value="DMRL_synthase"/>
    <property type="match status" value="1"/>
</dbReference>
<dbReference type="SUPFAM" id="SSF52121">
    <property type="entry name" value="Lumazine synthase"/>
    <property type="match status" value="1"/>
</dbReference>
<evidence type="ECO:0000255" key="1">
    <source>
        <dbReference type="HAMAP-Rule" id="MF_00178"/>
    </source>
</evidence>
<organism>
    <name type="scientific">Thermotoga neapolitana (strain ATCC 49049 / DSM 4359 / NBRC 107923 / NS-E)</name>
    <dbReference type="NCBI Taxonomy" id="309803"/>
    <lineage>
        <taxon>Bacteria</taxon>
        <taxon>Thermotogati</taxon>
        <taxon>Thermotogota</taxon>
        <taxon>Thermotogae</taxon>
        <taxon>Thermotogales</taxon>
        <taxon>Thermotogaceae</taxon>
        <taxon>Thermotoga</taxon>
    </lineage>
</organism>
<comment type="function">
    <text evidence="1">Catalyzes the formation of 6,7-dimethyl-8-ribityllumazine by condensation of 5-amino-6-(D-ribitylamino)uracil with 3,4-dihydroxy-2-butanone 4-phosphate. This is the penultimate step in the biosynthesis of riboflavin.</text>
</comment>
<comment type="catalytic activity">
    <reaction evidence="1">
        <text>(2S)-2-hydroxy-3-oxobutyl phosphate + 5-amino-6-(D-ribitylamino)uracil = 6,7-dimethyl-8-(1-D-ribityl)lumazine + phosphate + 2 H2O + H(+)</text>
        <dbReference type="Rhea" id="RHEA:26152"/>
        <dbReference type="ChEBI" id="CHEBI:15377"/>
        <dbReference type="ChEBI" id="CHEBI:15378"/>
        <dbReference type="ChEBI" id="CHEBI:15934"/>
        <dbReference type="ChEBI" id="CHEBI:43474"/>
        <dbReference type="ChEBI" id="CHEBI:58201"/>
        <dbReference type="ChEBI" id="CHEBI:58830"/>
        <dbReference type="EC" id="2.5.1.78"/>
    </reaction>
</comment>
<comment type="pathway">
    <text evidence="1">Cofactor biosynthesis; riboflavin biosynthesis; riboflavin from 2-hydroxy-3-oxobutyl phosphate and 5-amino-6-(D-ribitylamino)uracil: step 1/2.</text>
</comment>
<comment type="similarity">
    <text evidence="1">Belongs to the DMRL synthase family.</text>
</comment>
<proteinExistence type="inferred from homology"/>
<name>RISB_THENN</name>
<protein>
    <recommendedName>
        <fullName evidence="1">6,7-dimethyl-8-ribityllumazine synthase</fullName>
        <shortName evidence="1">DMRL synthase</shortName>
        <shortName evidence="1">LS</shortName>
        <shortName evidence="1">Lumazine synthase</shortName>
        <ecNumber evidence="1">2.5.1.78</ecNumber>
    </recommendedName>
</protein>
<feature type="chain" id="PRO_1000195516" description="6,7-dimethyl-8-ribityllumazine synthase">
    <location>
        <begin position="1"/>
        <end position="166"/>
    </location>
</feature>
<feature type="active site" description="Proton donor" evidence="1">
    <location>
        <position position="88"/>
    </location>
</feature>
<feature type="binding site" evidence="1">
    <location>
        <position position="22"/>
    </location>
    <ligand>
        <name>5-amino-6-(D-ribitylamino)uracil</name>
        <dbReference type="ChEBI" id="CHEBI:15934"/>
    </ligand>
</feature>
<feature type="binding site" evidence="1">
    <location>
        <begin position="56"/>
        <end position="58"/>
    </location>
    <ligand>
        <name>5-amino-6-(D-ribitylamino)uracil</name>
        <dbReference type="ChEBI" id="CHEBI:15934"/>
    </ligand>
</feature>
<feature type="binding site" evidence="1">
    <location>
        <begin position="80"/>
        <end position="82"/>
    </location>
    <ligand>
        <name>5-amino-6-(D-ribitylamino)uracil</name>
        <dbReference type="ChEBI" id="CHEBI:15934"/>
    </ligand>
</feature>
<feature type="binding site" evidence="1">
    <location>
        <begin position="85"/>
        <end position="86"/>
    </location>
    <ligand>
        <name>(2S)-2-hydroxy-3-oxobutyl phosphate</name>
        <dbReference type="ChEBI" id="CHEBI:58830"/>
    </ligand>
</feature>
<feature type="binding site" evidence="1">
    <location>
        <position position="113"/>
    </location>
    <ligand>
        <name>5-amino-6-(D-ribitylamino)uracil</name>
        <dbReference type="ChEBI" id="CHEBI:15934"/>
    </ligand>
</feature>
<feature type="binding site" evidence="1">
    <location>
        <position position="127"/>
    </location>
    <ligand>
        <name>(2S)-2-hydroxy-3-oxobutyl phosphate</name>
        <dbReference type="ChEBI" id="CHEBI:58830"/>
    </ligand>
</feature>
<sequence length="166" mass="18142">MKVVQGDYRGEGLKIAVVVPRFNDLVTSKLLEGALDGLKRHGVSDENITVVRIPGSMEAIYTLKRLLDLGVHDAIIVLGAVIRGETYHFNVVANEIGKAVAQFNMNSDVPIVFGVLTTDTLEQALNRAGAKSGNKGFEAAMVAIEMANLRKKLRRDFLEPHSNSRQ</sequence>
<reference key="1">
    <citation type="submission" date="2007-11" db="EMBL/GenBank/DDBJ databases">
        <title>The genome sequence of the hyperthermophilic bacterium Thermotoga neapolitana.</title>
        <authorList>
            <person name="Lim S.K."/>
            <person name="Kim J.S."/>
            <person name="Cha S.H."/>
            <person name="Park B.C."/>
            <person name="Lee D.S."/>
            <person name="Tae H.S."/>
            <person name="Kim S.-J."/>
            <person name="Kim J.J."/>
            <person name="Park K.J."/>
            <person name="Lee S.Y."/>
        </authorList>
    </citation>
    <scope>NUCLEOTIDE SEQUENCE [LARGE SCALE GENOMIC DNA]</scope>
    <source>
        <strain>ATCC 49049 / DSM 4359 / NBRC 107923 / NS-E</strain>
    </source>
</reference>